<evidence type="ECO:0000255" key="1">
    <source>
        <dbReference type="HAMAP-Rule" id="MF_00028"/>
    </source>
</evidence>
<name>COBQ_ALBFT</name>
<organism>
    <name type="scientific">Albidiferax ferrireducens (strain ATCC BAA-621 / DSM 15236 / T118)</name>
    <name type="common">Rhodoferax ferrireducens</name>
    <dbReference type="NCBI Taxonomy" id="338969"/>
    <lineage>
        <taxon>Bacteria</taxon>
        <taxon>Pseudomonadati</taxon>
        <taxon>Pseudomonadota</taxon>
        <taxon>Betaproteobacteria</taxon>
        <taxon>Burkholderiales</taxon>
        <taxon>Comamonadaceae</taxon>
        <taxon>Rhodoferax</taxon>
    </lineage>
</organism>
<feature type="chain" id="PRO_0000332383" description="Cobyric acid synthase">
    <location>
        <begin position="1"/>
        <end position="494"/>
    </location>
</feature>
<feature type="domain" description="GATase cobBQ-type" evidence="1">
    <location>
        <begin position="254"/>
        <end position="453"/>
    </location>
</feature>
<feature type="active site" description="Nucleophile" evidence="1">
    <location>
        <position position="338"/>
    </location>
</feature>
<feature type="active site" evidence="1">
    <location>
        <position position="445"/>
    </location>
</feature>
<proteinExistence type="inferred from homology"/>
<sequence>MTAKCIMVLGTTSGAGKSWLTTALCRYYARQGLKVAPFKAQNMSNNARVVASDKGSGEIGSAQYFQALAARSVPDVRMNPLLLKPEADTHSQVVLMGRVSDALTAMPWRSRSNHVWPHIAAALDELRSENDVVVIEGAGSPAEINLSGSDIVNMRVARHCDAACLLVTDIDRGGAFAHLYGTWALLPERERVLIKGFVLNKFRGDAALLAPAPQMLQDLTRIATVATLPMWWQHGLPEEDGVFDDRSTASGAVKQTVAVIAYPRISNLDEFQPLKNIPGLRLMWVRSPAELAGLSASDWVILPGSKATSSDLAWLRAQGLDAAVAAHAGRGGAVLGICAGLQMLGKALIDPQGVDGDAPGLGLLPLVTVFELDKTVRHTQATFADGIAAPWHALAAVTVSGYEIHQGITQPQSTPATAGEVARAVLPGGLAWQNAAGNVLGLYLHGLFEDPGALQALFGAQLNGPVPTLDVVFDRLADFIELHFQPGVLPGLLT</sequence>
<accession>Q21V75</accession>
<comment type="function">
    <text evidence="1">Catalyzes amidations at positions B, D, E, and G on adenosylcobyrinic A,C-diamide. NH(2) groups are provided by glutamine, and one molecule of ATP is hydrogenolyzed for each amidation.</text>
</comment>
<comment type="pathway">
    <text evidence="1">Cofactor biosynthesis; adenosylcobalamin biosynthesis.</text>
</comment>
<comment type="similarity">
    <text evidence="1">Belongs to the CobB/CobQ family. CobQ subfamily.</text>
</comment>
<dbReference type="EMBL" id="CP000267">
    <property type="protein sequence ID" value="ABD70328.1"/>
    <property type="molecule type" value="Genomic_DNA"/>
</dbReference>
<dbReference type="RefSeq" id="WP_011464896.1">
    <property type="nucleotide sequence ID" value="NC_007908.1"/>
</dbReference>
<dbReference type="STRING" id="338969.Rfer_2612"/>
<dbReference type="KEGG" id="rfr:Rfer_2612"/>
<dbReference type="eggNOG" id="COG1492">
    <property type="taxonomic scope" value="Bacteria"/>
</dbReference>
<dbReference type="HOGENOM" id="CLU_019250_2_1_4"/>
<dbReference type="OrthoDB" id="9808302at2"/>
<dbReference type="UniPathway" id="UPA00148"/>
<dbReference type="Proteomes" id="UP000008332">
    <property type="component" value="Chromosome"/>
</dbReference>
<dbReference type="GO" id="GO:0015420">
    <property type="term" value="F:ABC-type vitamin B12 transporter activity"/>
    <property type="evidence" value="ECO:0007669"/>
    <property type="project" value="UniProtKB-UniRule"/>
</dbReference>
<dbReference type="GO" id="GO:0003824">
    <property type="term" value="F:catalytic activity"/>
    <property type="evidence" value="ECO:0007669"/>
    <property type="project" value="InterPro"/>
</dbReference>
<dbReference type="GO" id="GO:0009236">
    <property type="term" value="P:cobalamin biosynthetic process"/>
    <property type="evidence" value="ECO:0007669"/>
    <property type="project" value="UniProtKB-UniRule"/>
</dbReference>
<dbReference type="CDD" id="cd05389">
    <property type="entry name" value="CobQ_N"/>
    <property type="match status" value="1"/>
</dbReference>
<dbReference type="CDD" id="cd01750">
    <property type="entry name" value="GATase1_CobQ"/>
    <property type="match status" value="1"/>
</dbReference>
<dbReference type="Gene3D" id="3.40.50.880">
    <property type="match status" value="1"/>
</dbReference>
<dbReference type="Gene3D" id="3.40.50.300">
    <property type="entry name" value="P-loop containing nucleotide triphosphate hydrolases"/>
    <property type="match status" value="1"/>
</dbReference>
<dbReference type="HAMAP" id="MF_00028">
    <property type="entry name" value="CobQ"/>
    <property type="match status" value="1"/>
</dbReference>
<dbReference type="InterPro" id="IPR029062">
    <property type="entry name" value="Class_I_gatase-like"/>
</dbReference>
<dbReference type="InterPro" id="IPR002586">
    <property type="entry name" value="CobQ/CobB/MinD/ParA_Nub-bd_dom"/>
</dbReference>
<dbReference type="InterPro" id="IPR033949">
    <property type="entry name" value="CobQ_GATase1"/>
</dbReference>
<dbReference type="InterPro" id="IPR047045">
    <property type="entry name" value="CobQ_N"/>
</dbReference>
<dbReference type="InterPro" id="IPR004459">
    <property type="entry name" value="CobQ_synth"/>
</dbReference>
<dbReference type="InterPro" id="IPR011698">
    <property type="entry name" value="GATase_3"/>
</dbReference>
<dbReference type="InterPro" id="IPR027417">
    <property type="entry name" value="P-loop_NTPase"/>
</dbReference>
<dbReference type="NCBIfam" id="TIGR00313">
    <property type="entry name" value="cobQ"/>
    <property type="match status" value="1"/>
</dbReference>
<dbReference type="NCBIfam" id="NF001989">
    <property type="entry name" value="PRK00784.1"/>
    <property type="match status" value="1"/>
</dbReference>
<dbReference type="PANTHER" id="PTHR21343:SF1">
    <property type="entry name" value="COBYRIC ACID SYNTHASE"/>
    <property type="match status" value="1"/>
</dbReference>
<dbReference type="PANTHER" id="PTHR21343">
    <property type="entry name" value="DETHIOBIOTIN SYNTHETASE"/>
    <property type="match status" value="1"/>
</dbReference>
<dbReference type="Pfam" id="PF01656">
    <property type="entry name" value="CbiA"/>
    <property type="match status" value="1"/>
</dbReference>
<dbReference type="Pfam" id="PF07685">
    <property type="entry name" value="GATase_3"/>
    <property type="match status" value="1"/>
</dbReference>
<dbReference type="SUPFAM" id="SSF52317">
    <property type="entry name" value="Class I glutamine amidotransferase-like"/>
    <property type="match status" value="1"/>
</dbReference>
<dbReference type="SUPFAM" id="SSF52540">
    <property type="entry name" value="P-loop containing nucleoside triphosphate hydrolases"/>
    <property type="match status" value="1"/>
</dbReference>
<dbReference type="PROSITE" id="PS51274">
    <property type="entry name" value="GATASE_COBBQ"/>
    <property type="match status" value="1"/>
</dbReference>
<keyword id="KW-0169">Cobalamin biosynthesis</keyword>
<keyword id="KW-0315">Glutamine amidotransferase</keyword>
<keyword id="KW-1185">Reference proteome</keyword>
<gene>
    <name evidence="1" type="primary">cobQ</name>
    <name type="ordered locus">Rfer_2612</name>
</gene>
<reference key="1">
    <citation type="submission" date="2006-02" db="EMBL/GenBank/DDBJ databases">
        <title>Complete sequence of chromosome of Rhodoferax ferrireducens DSM 15236.</title>
        <authorList>
            <person name="Copeland A."/>
            <person name="Lucas S."/>
            <person name="Lapidus A."/>
            <person name="Barry K."/>
            <person name="Detter J.C."/>
            <person name="Glavina del Rio T."/>
            <person name="Hammon N."/>
            <person name="Israni S."/>
            <person name="Pitluck S."/>
            <person name="Brettin T."/>
            <person name="Bruce D."/>
            <person name="Han C."/>
            <person name="Tapia R."/>
            <person name="Gilna P."/>
            <person name="Kiss H."/>
            <person name="Schmutz J."/>
            <person name="Larimer F."/>
            <person name="Land M."/>
            <person name="Kyrpides N."/>
            <person name="Ivanova N."/>
            <person name="Richardson P."/>
        </authorList>
    </citation>
    <scope>NUCLEOTIDE SEQUENCE [LARGE SCALE GENOMIC DNA]</scope>
    <source>
        <strain>ATCC BAA-621 / DSM 15236 / T118</strain>
    </source>
</reference>
<protein>
    <recommendedName>
        <fullName evidence="1">Cobyric acid synthase</fullName>
    </recommendedName>
</protein>